<evidence type="ECO:0000255" key="1">
    <source>
        <dbReference type="PROSITE-ProRule" id="PRU00639"/>
    </source>
</evidence>
<evidence type="ECO:0000269" key="2">
    <source>
    </source>
</evidence>
<evidence type="ECO:0000269" key="3">
    <source>
    </source>
</evidence>
<evidence type="ECO:0000303" key="4">
    <source>
    </source>
</evidence>
<evidence type="ECO:0000305" key="5"/>
<evidence type="ECO:0000312" key="6">
    <source>
        <dbReference type="EMBL" id="AAP93924.1"/>
    </source>
</evidence>
<evidence type="ECO:0000312" key="7">
    <source>
        <dbReference type="PDB" id="1WW4"/>
    </source>
</evidence>
<evidence type="ECO:0007744" key="8">
    <source>
        <dbReference type="PDB" id="1WW4"/>
    </source>
</evidence>
<evidence type="ECO:0007744" key="9">
    <source>
        <dbReference type="PDB" id="1WW5"/>
    </source>
</evidence>
<evidence type="ECO:0007744" key="10">
    <source>
        <dbReference type="PDB" id="1WW6"/>
    </source>
</evidence>
<evidence type="ECO:0007744" key="11">
    <source>
        <dbReference type="PDB" id="1WW7"/>
    </source>
</evidence>
<evidence type="ECO:0007829" key="12">
    <source>
        <dbReference type="PDB" id="2ZGL"/>
    </source>
</evidence>
<evidence type="ECO:0007829" key="13">
    <source>
        <dbReference type="PDB" id="2ZGT"/>
    </source>
</evidence>
<evidence type="ECO:0007829" key="14">
    <source>
        <dbReference type="PDB" id="2ZGU"/>
    </source>
</evidence>
<evidence type="ECO:0007829" key="15">
    <source>
        <dbReference type="PDB" id="3M3C"/>
    </source>
</evidence>
<evidence type="ECO:0007829" key="16">
    <source>
        <dbReference type="PDB" id="3WG3"/>
    </source>
</evidence>
<name>ATLE_CYCAE</name>
<protein>
    <recommendedName>
        <fullName>Anti-tumor lectin</fullName>
        <ecNumber>3.1.21.-</ecNumber>
    </recommendedName>
    <alternativeName>
        <fullName>AAL</fullName>
    </alternativeName>
</protein>
<proteinExistence type="evidence at protein level"/>
<accession>Q6WY08</accession>
<keyword id="KW-0002">3D-structure</keyword>
<keyword id="KW-0053">Apoptosis</keyword>
<keyword id="KW-0903">Direct protein sequencing</keyword>
<keyword id="KW-0378">Hydrolase</keyword>
<keyword id="KW-0430">Lectin</keyword>
<keyword id="KW-0540">Nuclease</keyword>
<feature type="chain" id="PRO_0000076969" description="Anti-tumor lectin">
    <location>
        <begin position="1" status="less than"/>
        <end position="158"/>
    </location>
</feature>
<feature type="domain" description="Galectin" evidence="1">
    <location>
        <begin position="12"/>
        <end position="155"/>
    </location>
</feature>
<feature type="binding site" evidence="3 7">
    <location>
        <position position="43"/>
    </location>
    <ligand>
        <name>N-acetyl-alpha-neuraminyl-(2-&gt;3)-beta-D-galactosyl-(1-&gt;4)-beta-D-glucose</name>
        <dbReference type="ChEBI" id="CHEBI:232876"/>
    </ligand>
</feature>
<feature type="binding site" evidence="3 7">
    <location>
        <position position="59"/>
    </location>
    <ligand>
        <name>N-acetyl-alpha-neuraminyl-(2-&gt;3)-beta-D-galactosyl-(1-&gt;4)-beta-D-glucose</name>
        <dbReference type="ChEBI" id="CHEBI:232876"/>
    </ligand>
</feature>
<feature type="binding site" evidence="3 7">
    <location>
        <position position="63"/>
    </location>
    <ligand>
        <name>N-acetyl-alpha-neuraminyl-(2-&gt;3)-beta-D-galactosyl-(1-&gt;4)-beta-D-glucose</name>
        <dbReference type="ChEBI" id="CHEBI:232876"/>
    </ligand>
</feature>
<feature type="binding site" evidence="3 7">
    <location>
        <position position="72"/>
    </location>
    <ligand>
        <name>N-acetyl-alpha-neuraminyl-(2-&gt;3)-beta-D-galactosyl-(1-&gt;4)-beta-D-glucose</name>
        <dbReference type="ChEBI" id="CHEBI:232876"/>
    </ligand>
</feature>
<feature type="binding site" evidence="3 7">
    <location>
        <position position="74"/>
    </location>
    <ligand>
        <name>N-acetyl-alpha-neuraminyl-(2-&gt;3)-beta-D-galactosyl-(1-&gt;4)-beta-D-glucose</name>
        <dbReference type="ChEBI" id="CHEBI:232876"/>
    </ligand>
</feature>
<feature type="binding site" evidence="3 7">
    <location>
        <position position="80"/>
    </location>
    <ligand>
        <name>N-acetyl-alpha-neuraminyl-(2-&gt;3)-beta-D-galactosyl-(1-&gt;4)-beta-D-glucose</name>
        <dbReference type="ChEBI" id="CHEBI:232876"/>
    </ligand>
</feature>
<feature type="binding site" evidence="3 7">
    <location>
        <position position="83"/>
    </location>
    <ligand>
        <name>N-acetyl-alpha-neuraminyl-(2-&gt;3)-beta-D-galactosyl-(1-&gt;4)-beta-D-glucose</name>
        <dbReference type="ChEBI" id="CHEBI:232876"/>
    </ligand>
</feature>
<feature type="modified residue" description="Blocked amino end (Gln)" evidence="2">
    <location>
        <position position="1"/>
    </location>
</feature>
<feature type="non-terminal residue" evidence="4">
    <location>
        <position position="1"/>
    </location>
</feature>
<feature type="strand" evidence="16">
    <location>
        <begin position="2"/>
        <end position="9"/>
    </location>
</feature>
<feature type="strand" evidence="16">
    <location>
        <begin position="12"/>
        <end position="20"/>
    </location>
</feature>
<feature type="strand" evidence="16">
    <location>
        <begin position="25"/>
        <end position="31"/>
    </location>
</feature>
<feature type="strand" evidence="14">
    <location>
        <begin position="38"/>
        <end position="40"/>
    </location>
</feature>
<feature type="strand" evidence="16">
    <location>
        <begin position="45"/>
        <end position="50"/>
    </location>
</feature>
<feature type="strand" evidence="16">
    <location>
        <begin position="56"/>
        <end position="63"/>
    </location>
</feature>
<feature type="turn" evidence="16">
    <location>
        <begin position="64"/>
        <end position="67"/>
    </location>
</feature>
<feature type="strand" evidence="16">
    <location>
        <begin position="68"/>
        <end position="74"/>
    </location>
</feature>
<feature type="strand" evidence="15">
    <location>
        <begin position="76"/>
        <end position="78"/>
    </location>
</feature>
<feature type="strand" evidence="16">
    <location>
        <begin position="84"/>
        <end position="87"/>
    </location>
</feature>
<feature type="helix" evidence="16">
    <location>
        <begin position="90"/>
        <end position="93"/>
    </location>
</feature>
<feature type="strand" evidence="13">
    <location>
        <begin position="96"/>
        <end position="98"/>
    </location>
</feature>
<feature type="strand" evidence="16">
    <location>
        <begin position="100"/>
        <end position="106"/>
    </location>
</feature>
<feature type="strand" evidence="16">
    <location>
        <begin position="108"/>
        <end position="115"/>
    </location>
</feature>
<feature type="strand" evidence="16">
    <location>
        <begin position="118"/>
        <end position="124"/>
    </location>
</feature>
<feature type="strand" evidence="16">
    <location>
        <begin position="131"/>
        <end position="137"/>
    </location>
</feature>
<feature type="turn" evidence="12">
    <location>
        <begin position="140"/>
        <end position="142"/>
    </location>
</feature>
<feature type="strand" evidence="16">
    <location>
        <begin position="147"/>
        <end position="155"/>
    </location>
</feature>
<sequence>QGVNIYNISAGTSVDLAAPVTTGDIVTFFSSALNLNAGAGNPNNTTLNLFAENGAYLLHIAFRLQENVIIFNSRQPDGPWLVEQRVSDVANQFAGIDGKAMVTVFDHGDKYQVVINEKTVIQYTKQISGLTLSLSYNATEETSIFSTVVEAVTYTGLA</sequence>
<comment type="function">
    <text evidence="2 3">Anti-tumor lectin with DNase activity. Inhibits the growth of several tumor cell lines in vitro. Induces lymphocyte infiltration and necrosis of tumor cells in a mouse tumor model. Induces apoptosis in HeLa cells. Binds N-acetylneuraminyl lactose (N-acetyl-alpha-neuraminyl-(2-&gt;3)-beta-D-galactosyl-(1-&gt;4)-beta-D-glucose) (PubMed:16051274).</text>
</comment>
<comment type="subunit">
    <text evidence="2 3">Homodimer.</text>
</comment>
<comment type="tissue specificity">
    <text evidence="2">Detected in the fruiting body.</text>
</comment>
<reference evidence="6" key="1">
    <citation type="submission" date="2003-03" db="EMBL/GenBank/DDBJ databases">
        <authorList>
            <person name="Tong X."/>
            <person name="Sun H."/>
            <person name="Zhao C."/>
            <person name="Qi Y."/>
        </authorList>
    </citation>
    <scope>NUCLEOTIDE SEQUENCE [MRNA]</scope>
</reference>
<reference evidence="5" key="2">
    <citation type="journal article" date="2003" name="Biochem. J.">
        <title>An antitumour lectin from the edible mushroom Agrocybe aegerita.</title>
        <authorList>
            <person name="Zhao C."/>
            <person name="Sun H."/>
            <person name="Tong X."/>
            <person name="Qi Y."/>
        </authorList>
    </citation>
    <scope>PROTEIN SEQUENCE OF 1-8 AND 75-85</scope>
    <scope>FUNCTION</scope>
    <scope>SUBUNIT</scope>
    <scope>TISSUE SPECIFICITY</scope>
    <source>
        <tissue evidence="2">Fruiting body</tissue>
    </source>
</reference>
<reference evidence="8 9 10 11" key="3">
    <citation type="journal article" date="2005" name="J. Mol. Biol.">
        <title>Structural basis of a fungal galectin from Agrocybe cylindracea for recognizing sialoconjugate.</title>
        <authorList>
            <person name="Ban M."/>
            <person name="Yoon H.-J."/>
            <person name="Demirkan E."/>
            <person name="Utsumi S."/>
            <person name="Mikami B."/>
            <person name="Yagi F."/>
        </authorList>
    </citation>
    <scope>X-RAY CRYSTALLOGRAPHY (1.9 ANGSTROMS) OF 3-158 OF APOPROTEIN AND COMPLEXES WITH CARBOHYDRATES INCLUDING N-ACETYLNEURAMINYL LACTOSE</scope>
    <scope>FUNCTION</scope>
    <scope>SUBUNIT</scope>
</reference>
<organism>
    <name type="scientific">Cyclocybe aegerita</name>
    <name type="common">Black poplar mushroom</name>
    <name type="synonym">Agrocybe aegerita</name>
    <dbReference type="NCBI Taxonomy" id="1973307"/>
    <lineage>
        <taxon>Eukaryota</taxon>
        <taxon>Fungi</taxon>
        <taxon>Dikarya</taxon>
        <taxon>Basidiomycota</taxon>
        <taxon>Agaricomycotina</taxon>
        <taxon>Agaricomycetes</taxon>
        <taxon>Agaricomycetidae</taxon>
        <taxon>Agaricales</taxon>
        <taxon>Agaricineae</taxon>
        <taxon>Bolbitiaceae</taxon>
        <taxon>Cyclocybe</taxon>
    </lineage>
</organism>
<dbReference type="EC" id="3.1.21.-"/>
<dbReference type="EMBL" id="AY264782">
    <property type="protein sequence ID" value="AAP93924.1"/>
    <property type="molecule type" value="mRNA"/>
</dbReference>
<dbReference type="PDB" id="1WW4">
    <property type="method" value="X-ray"/>
    <property type="resolution" value="2.30 A"/>
    <property type="chains" value="A/B/C/D=3-158"/>
</dbReference>
<dbReference type="PDB" id="1WW5">
    <property type="method" value="X-ray"/>
    <property type="resolution" value="2.20 A"/>
    <property type="chains" value="A/B/C/D=3-158"/>
</dbReference>
<dbReference type="PDB" id="1WW6">
    <property type="method" value="X-ray"/>
    <property type="resolution" value="2.20 A"/>
    <property type="chains" value="A/B/C/D=3-158"/>
</dbReference>
<dbReference type="PDB" id="1WW7">
    <property type="method" value="X-ray"/>
    <property type="resolution" value="1.90 A"/>
    <property type="chains" value="A/B/C/D=3-158"/>
</dbReference>
<dbReference type="PDB" id="2ZGK">
    <property type="method" value="X-ray"/>
    <property type="resolution" value="3.00 A"/>
    <property type="chains" value="A=1-158"/>
</dbReference>
<dbReference type="PDB" id="2ZGL">
    <property type="method" value="X-ray"/>
    <property type="resolution" value="1.90 A"/>
    <property type="chains" value="A/B=1-158"/>
</dbReference>
<dbReference type="PDB" id="2ZGM">
    <property type="method" value="X-ray"/>
    <property type="resolution" value="1.90 A"/>
    <property type="chains" value="A/B=1-158"/>
</dbReference>
<dbReference type="PDB" id="2ZGN">
    <property type="method" value="X-ray"/>
    <property type="resolution" value="2.50 A"/>
    <property type="chains" value="A/B=1-158"/>
</dbReference>
<dbReference type="PDB" id="2ZGO">
    <property type="method" value="X-ray"/>
    <property type="resolution" value="2.00 A"/>
    <property type="chains" value="A/B=1-158"/>
</dbReference>
<dbReference type="PDB" id="2ZGP">
    <property type="method" value="X-ray"/>
    <property type="resolution" value="2.70 A"/>
    <property type="chains" value="A/B=1-158"/>
</dbReference>
<dbReference type="PDB" id="2ZGQ">
    <property type="method" value="X-ray"/>
    <property type="resolution" value="1.90 A"/>
    <property type="chains" value="A/B=1-158"/>
</dbReference>
<dbReference type="PDB" id="2ZGR">
    <property type="method" value="X-ray"/>
    <property type="resolution" value="1.90 A"/>
    <property type="chains" value="A=1-158"/>
</dbReference>
<dbReference type="PDB" id="2ZGS">
    <property type="method" value="X-ray"/>
    <property type="resolution" value="1.90 A"/>
    <property type="chains" value="A/B=1-158"/>
</dbReference>
<dbReference type="PDB" id="2ZGT">
    <property type="method" value="X-ray"/>
    <property type="resolution" value="2.80 A"/>
    <property type="chains" value="A/B=1-158"/>
</dbReference>
<dbReference type="PDB" id="2ZGU">
    <property type="method" value="X-ray"/>
    <property type="resolution" value="2.40 A"/>
    <property type="chains" value="A/B=1-158"/>
</dbReference>
<dbReference type="PDB" id="3AFK">
    <property type="method" value="X-ray"/>
    <property type="resolution" value="1.95 A"/>
    <property type="chains" value="A/B=1-158"/>
</dbReference>
<dbReference type="PDB" id="3M3C">
    <property type="method" value="X-ray"/>
    <property type="resolution" value="2.00 A"/>
    <property type="chains" value="A/B=1-158"/>
</dbReference>
<dbReference type="PDB" id="3M3E">
    <property type="method" value="X-ray"/>
    <property type="resolution" value="2.10 A"/>
    <property type="chains" value="A/B/C/D=1-158"/>
</dbReference>
<dbReference type="PDB" id="3M3O">
    <property type="method" value="X-ray"/>
    <property type="resolution" value="2.10 A"/>
    <property type="chains" value="A=1-158"/>
</dbReference>
<dbReference type="PDB" id="3M3Q">
    <property type="method" value="X-ray"/>
    <property type="resolution" value="2.20 A"/>
    <property type="chains" value="A/B=1-158"/>
</dbReference>
<dbReference type="PDB" id="3WG1">
    <property type="method" value="X-ray"/>
    <property type="resolution" value="1.90 A"/>
    <property type="chains" value="A/B=3-158"/>
</dbReference>
<dbReference type="PDB" id="3WG2">
    <property type="method" value="X-ray"/>
    <property type="resolution" value="2.20 A"/>
    <property type="chains" value="A/B=3-158"/>
</dbReference>
<dbReference type="PDB" id="3WG3">
    <property type="method" value="X-ray"/>
    <property type="resolution" value="1.35 A"/>
    <property type="chains" value="A/B=3-158"/>
</dbReference>
<dbReference type="PDB" id="3WG4">
    <property type="method" value="X-ray"/>
    <property type="resolution" value="1.60 A"/>
    <property type="chains" value="A/B=3-158"/>
</dbReference>
<dbReference type="PDBsum" id="1WW4"/>
<dbReference type="PDBsum" id="1WW5"/>
<dbReference type="PDBsum" id="1WW6"/>
<dbReference type="PDBsum" id="1WW7"/>
<dbReference type="PDBsum" id="2ZGK"/>
<dbReference type="PDBsum" id="2ZGL"/>
<dbReference type="PDBsum" id="2ZGM"/>
<dbReference type="PDBsum" id="2ZGN"/>
<dbReference type="PDBsum" id="2ZGO"/>
<dbReference type="PDBsum" id="2ZGP"/>
<dbReference type="PDBsum" id="2ZGQ"/>
<dbReference type="PDBsum" id="2ZGR"/>
<dbReference type="PDBsum" id="2ZGS"/>
<dbReference type="PDBsum" id="2ZGT"/>
<dbReference type="PDBsum" id="2ZGU"/>
<dbReference type="PDBsum" id="3AFK"/>
<dbReference type="PDBsum" id="3M3C"/>
<dbReference type="PDBsum" id="3M3E"/>
<dbReference type="PDBsum" id="3M3O"/>
<dbReference type="PDBsum" id="3M3Q"/>
<dbReference type="PDBsum" id="3WG1"/>
<dbReference type="PDBsum" id="3WG2"/>
<dbReference type="PDBsum" id="3WG3"/>
<dbReference type="PDBsum" id="3WG4"/>
<dbReference type="SMR" id="Q6WY08"/>
<dbReference type="MINT" id="Q6WY08"/>
<dbReference type="UniLectin" id="Q6WY08"/>
<dbReference type="EvolutionaryTrace" id="Q6WY08"/>
<dbReference type="GO" id="GO:0004536">
    <property type="term" value="F:DNA nuclease activity"/>
    <property type="evidence" value="ECO:0000314"/>
    <property type="project" value="UniProtKB"/>
</dbReference>
<dbReference type="GO" id="GO:0030247">
    <property type="term" value="F:polysaccharide binding"/>
    <property type="evidence" value="ECO:0000314"/>
    <property type="project" value="UniProtKB"/>
</dbReference>
<dbReference type="GO" id="GO:0006915">
    <property type="term" value="P:apoptotic process"/>
    <property type="evidence" value="ECO:0007669"/>
    <property type="project" value="UniProtKB-KW"/>
</dbReference>
<dbReference type="GO" id="GO:0043065">
    <property type="term" value="P:positive regulation of apoptotic process"/>
    <property type="evidence" value="ECO:0000314"/>
    <property type="project" value="UniProtKB"/>
</dbReference>
<dbReference type="FunFam" id="2.60.120.200:FF:000388">
    <property type="entry name" value="Anti-tumor lectin"/>
    <property type="match status" value="1"/>
</dbReference>
<dbReference type="Gene3D" id="2.60.120.200">
    <property type="match status" value="1"/>
</dbReference>
<dbReference type="InterPro" id="IPR013320">
    <property type="entry name" value="ConA-like_dom_sf"/>
</dbReference>
<dbReference type="InterPro" id="IPR001079">
    <property type="entry name" value="Galectin_CRD"/>
</dbReference>
<dbReference type="Pfam" id="PF00337">
    <property type="entry name" value="Gal-bind_lectin"/>
    <property type="match status" value="1"/>
</dbReference>
<dbReference type="SMART" id="SM00276">
    <property type="entry name" value="GLECT"/>
    <property type="match status" value="1"/>
</dbReference>
<dbReference type="SUPFAM" id="SSF49899">
    <property type="entry name" value="Concanavalin A-like lectins/glucanases"/>
    <property type="match status" value="1"/>
</dbReference>
<dbReference type="PROSITE" id="PS51304">
    <property type="entry name" value="GALECTIN"/>
    <property type="match status" value="1"/>
</dbReference>